<feature type="chain" id="PRO_0000284884" description="E3 ubiquitin-protein ligase SH3RF3">
    <location>
        <begin position="1"/>
        <end position="878"/>
    </location>
</feature>
<feature type="domain" description="SH3 1" evidence="3">
    <location>
        <begin position="187"/>
        <end position="246"/>
    </location>
</feature>
<feature type="domain" description="SH3 2" evidence="3">
    <location>
        <begin position="249"/>
        <end position="312"/>
    </location>
</feature>
<feature type="domain" description="SH3 3" evidence="3">
    <location>
        <begin position="458"/>
        <end position="519"/>
    </location>
</feature>
<feature type="domain" description="SH3 4" evidence="3">
    <location>
        <begin position="819"/>
        <end position="878"/>
    </location>
</feature>
<feature type="zinc finger region" description="RING-type" evidence="2">
    <location>
        <begin position="52"/>
        <end position="93"/>
    </location>
</feature>
<feature type="region of interest" description="Disordered" evidence="4">
    <location>
        <begin position="19"/>
        <end position="40"/>
    </location>
</feature>
<feature type="region of interest" description="Disordered" evidence="4">
    <location>
        <begin position="120"/>
        <end position="145"/>
    </location>
</feature>
<feature type="region of interest" description="Interaction with RAC1" evidence="1">
    <location>
        <begin position="364"/>
        <end position="433"/>
    </location>
</feature>
<feature type="region of interest" description="Disordered" evidence="4">
    <location>
        <begin position="574"/>
        <end position="659"/>
    </location>
</feature>
<feature type="region of interest" description="Disordered" evidence="4">
    <location>
        <begin position="688"/>
        <end position="758"/>
    </location>
</feature>
<feature type="compositionally biased region" description="Polar residues" evidence="4">
    <location>
        <begin position="590"/>
        <end position="609"/>
    </location>
</feature>
<feature type="compositionally biased region" description="Polar residues" evidence="4">
    <location>
        <begin position="618"/>
        <end position="633"/>
    </location>
</feature>
<feature type="compositionally biased region" description="Polar residues" evidence="4">
    <location>
        <begin position="643"/>
        <end position="653"/>
    </location>
</feature>
<feature type="compositionally biased region" description="Polar residues" evidence="4">
    <location>
        <begin position="690"/>
        <end position="699"/>
    </location>
</feature>
<feature type="compositionally biased region" description="Basic and acidic residues" evidence="4">
    <location>
        <begin position="703"/>
        <end position="716"/>
    </location>
</feature>
<feature type="compositionally biased region" description="Polar residues" evidence="4">
    <location>
        <begin position="741"/>
        <end position="752"/>
    </location>
</feature>
<feature type="modified residue" description="Phosphoserine" evidence="1">
    <location>
        <position position="395"/>
    </location>
</feature>
<feature type="modified residue" description="Phosphoserine" evidence="1">
    <location>
        <position position="792"/>
    </location>
</feature>
<feature type="splice variant" id="VSP_024718" description="In isoform 3." evidence="6">
    <location>
        <begin position="1"/>
        <end position="415"/>
    </location>
</feature>
<feature type="splice variant" id="VSP_024719" description="In isoform 2." evidence="5 6">
    <location>
        <begin position="1"/>
        <end position="261"/>
    </location>
</feature>
<feature type="splice variant" id="VSP_024720" description="In isoform 3." evidence="6">
    <original>GELAHLSCTVPTQ</original>
    <variation>MDAPEKYTERATP</variation>
    <location>
        <begin position="416"/>
        <end position="428"/>
    </location>
</feature>
<feature type="splice variant" id="VSP_024724" description="In isoform 4." evidence="6">
    <original>DSSSAGPVPT</original>
    <variation>VIPRAGGLCP</variation>
    <location>
        <begin position="429"/>
        <end position="438"/>
    </location>
</feature>
<feature type="splice variant" id="VSP_024725" description="In isoform 4." evidence="6">
    <location>
        <begin position="439"/>
        <end position="878"/>
    </location>
</feature>
<feature type="splice variant" id="VSP_024721" description="In isoform 3." evidence="6">
    <original>S</original>
    <variation>SRSPHPSHSGEVRVRLAQE</variation>
    <location>
        <position position="518"/>
    </location>
</feature>
<feature type="splice variant" id="VSP_024722" description="In isoform 3." evidence="6">
    <original>KEKKSGLLKLLAGASTKKKSRSPPSVSPTH</original>
    <variation>VSGPSWANPEPGAGWLLGPSHTLANGAENR</variation>
    <location>
        <begin position="712"/>
        <end position="741"/>
    </location>
</feature>
<feature type="splice variant" id="VSP_024723" description="In isoform 3." evidence="6">
    <location>
        <begin position="742"/>
        <end position="878"/>
    </location>
</feature>
<name>SH3R3_MOUSE</name>
<evidence type="ECO:0000250" key="1">
    <source>
        <dbReference type="UniProtKB" id="Q8TEJ3"/>
    </source>
</evidence>
<evidence type="ECO:0000255" key="2">
    <source>
        <dbReference type="PROSITE-ProRule" id="PRU00175"/>
    </source>
</evidence>
<evidence type="ECO:0000255" key="3">
    <source>
        <dbReference type="PROSITE-ProRule" id="PRU00192"/>
    </source>
</evidence>
<evidence type="ECO:0000256" key="4">
    <source>
        <dbReference type="SAM" id="MobiDB-lite"/>
    </source>
</evidence>
<evidence type="ECO:0000303" key="5">
    <source>
    </source>
</evidence>
<evidence type="ECO:0000303" key="6">
    <source>
    </source>
</evidence>
<evidence type="ECO:0000305" key="7"/>
<sequence length="878" mass="93130">MLLGASWLCASKAAATAARGEGEDRQGEQQRGAQARTEEDMDESSLLDLLECSVCLERLDTTAKVLPCQHTFCRRCLESIVCSRHELRCPECRILVGCGVDELPANILLVRLLDGIRQRPRTGASPGSSPPARPGPGTFSALAGGAGGATGSPPCSPVFLSAAAGSSTSSLCDVATNRSVPVAKTLSQLPYAKALYSYEGKEPGDLKFNKGDIIILRRKVDENWYHGELQGMHGFLPASYIQCVRPLPQALPQGKALYDFEMKDRDQDKDCLTFTKDEVLTVIRRVDDNWAEGMLGDKIGIFPLLYVELNDSAKQLIEMDKLCPAATTAYNYDALLSSDPSTVASVAPGPTLSSSGAVSAFQRRVDSKKNAKKRHSFTALSVTHKSSQAASHRHSMEISAPVLISSSDPRAAARIGELAHLSCTVPTQDSSSAGPVPTALPRAAAVAGEQGMSPKVQLPLNVYLALYAYKPQKNDELELRKGEMYRVLEKCQDGWFKGASLKTGVSGVFPGNYVTPVSRVPGGGAGLPWNNVLGGSPLAKGMATIMHPGGGSLSSPATAARSALPLTTLQDHMQHPATSLPTGSCLRHSAQPTASQAGDTTIPTATHASAQALDRPTATVSPLRTQTSPSRLPSTGLRPRSVASPQHGQQSPAQMCPRPAIPFTSAASAITPPNVSAANLSGEVGGTPISGLSTPSLINTGFKPDDKKNEKKEKKSGLLKLLAGASTKKKSRSPPSVSPTHDPQSAMDTSLQGAMGPEVSPLTVHGRAGSCPIESEMQGAIGLEPLHRKAGSLDLNFSLSPSRQATLSMASIRPEPKPLPRERYRVVVSYPPQSEAEIELKEGDIVFVHKKHEDGWFKGTLQRNGRTGLFPGSFVESF</sequence>
<gene>
    <name type="primary">Sh3rf3</name>
    <name type="synonym">Posh2</name>
    <name type="synonym">Sh3md4</name>
</gene>
<organism>
    <name type="scientific">Mus musculus</name>
    <name type="common">Mouse</name>
    <dbReference type="NCBI Taxonomy" id="10090"/>
    <lineage>
        <taxon>Eukaryota</taxon>
        <taxon>Metazoa</taxon>
        <taxon>Chordata</taxon>
        <taxon>Craniata</taxon>
        <taxon>Vertebrata</taxon>
        <taxon>Euteleostomi</taxon>
        <taxon>Mammalia</taxon>
        <taxon>Eutheria</taxon>
        <taxon>Euarchontoglires</taxon>
        <taxon>Glires</taxon>
        <taxon>Rodentia</taxon>
        <taxon>Myomorpha</taxon>
        <taxon>Muroidea</taxon>
        <taxon>Muridae</taxon>
        <taxon>Murinae</taxon>
        <taxon>Mus</taxon>
        <taxon>Mus</taxon>
    </lineage>
</organism>
<keyword id="KW-0025">Alternative splicing</keyword>
<keyword id="KW-0479">Metal-binding</keyword>
<keyword id="KW-0597">Phosphoprotein</keyword>
<keyword id="KW-1185">Reference proteome</keyword>
<keyword id="KW-0677">Repeat</keyword>
<keyword id="KW-0728">SH3 domain</keyword>
<keyword id="KW-0808">Transferase</keyword>
<keyword id="KW-0832">Ubl conjugation</keyword>
<keyword id="KW-0833">Ubl conjugation pathway</keyword>
<keyword id="KW-0862">Zinc</keyword>
<keyword id="KW-0863">Zinc-finger</keyword>
<comment type="function">
    <text evidence="1">Has E3 ubiquitin-protein ligase activity.</text>
</comment>
<comment type="catalytic activity">
    <reaction evidence="1">
        <text>S-ubiquitinyl-[E2 ubiquitin-conjugating enzyme]-L-cysteine + [acceptor protein]-L-lysine = [E2 ubiquitin-conjugating enzyme]-L-cysteine + N(6)-ubiquitinyl-[acceptor protein]-L-lysine.</text>
        <dbReference type="EC" id="2.3.2.27"/>
    </reaction>
</comment>
<comment type="pathway">
    <text>Protein modification; protein ubiquitination.</text>
</comment>
<comment type="subunit">
    <text evidence="1">Interacts (via SH3 domain 3) with PAK2. Interacts with RAC1 (GTP-bound form).</text>
</comment>
<comment type="alternative products">
    <event type="alternative splicing"/>
    <isoform>
        <id>Q8C120-1</id>
        <name>1</name>
        <sequence type="displayed"/>
    </isoform>
    <isoform>
        <id>Q8C120-2</id>
        <name>2</name>
        <sequence type="described" ref="VSP_024719"/>
    </isoform>
    <isoform>
        <id>Q8C120-3</id>
        <name>3</name>
        <sequence type="described" ref="VSP_024718 VSP_024720 VSP_024721 VSP_024722 VSP_024723"/>
    </isoform>
    <isoform>
        <id>Q8C120-4</id>
        <name>4</name>
        <sequence type="described" ref="VSP_024724 VSP_024725"/>
    </isoform>
</comment>
<comment type="domain">
    <text evidence="1">The RING finger domain is required for ubiquitin ligase activity and autoubiquitination.</text>
</comment>
<comment type="PTM">
    <text evidence="1">Autoubiquitinated.</text>
</comment>
<comment type="similarity">
    <text evidence="7">Belongs to the SH3RF family.</text>
</comment>
<proteinExistence type="evidence at protein level"/>
<protein>
    <recommendedName>
        <fullName>E3 ubiquitin-protein ligase SH3RF3</fullName>
        <ecNumber evidence="1">2.3.2.27</ecNumber>
    </recommendedName>
    <alternativeName>
        <fullName>Plenty of SH3s 2</fullName>
    </alternativeName>
    <alternativeName>
        <fullName>SH3 domain-containing RING finger protein 3</fullName>
    </alternativeName>
    <alternativeName>
        <fullName>SH3 multiple domains protein 4</fullName>
    </alternativeName>
</protein>
<dbReference type="EC" id="2.3.2.27" evidence="1"/>
<dbReference type="EMBL" id="AC153367">
    <property type="status" value="NOT_ANNOTATED_CDS"/>
    <property type="molecule type" value="Genomic_DNA"/>
</dbReference>
<dbReference type="EMBL" id="AC159909">
    <property type="status" value="NOT_ANNOTATED_CDS"/>
    <property type="molecule type" value="Genomic_DNA"/>
</dbReference>
<dbReference type="EMBL" id="AK029202">
    <property type="protein sequence ID" value="BAC26346.1"/>
    <property type="molecule type" value="mRNA"/>
</dbReference>
<dbReference type="EMBL" id="AK132983">
    <property type="protein sequence ID" value="BAE21454.1"/>
    <property type="molecule type" value="mRNA"/>
</dbReference>
<dbReference type="EMBL" id="AK133071">
    <property type="protein sequence ID" value="BAE21496.1"/>
    <property type="molecule type" value="mRNA"/>
</dbReference>
<dbReference type="EMBL" id="BC057304">
    <property type="protein sequence ID" value="AAH57304.1"/>
    <property type="molecule type" value="mRNA"/>
</dbReference>
<dbReference type="CCDS" id="CCDS35906.2">
    <molecule id="Q8C120-1"/>
</dbReference>
<dbReference type="RefSeq" id="NP_766376.2">
    <molecule id="Q8C120-1"/>
    <property type="nucleotide sequence ID" value="NM_172788.3"/>
</dbReference>
<dbReference type="SMR" id="Q8C120"/>
<dbReference type="BioGRID" id="231867">
    <property type="interactions" value="1"/>
</dbReference>
<dbReference type="FunCoup" id="Q8C120">
    <property type="interactions" value="65"/>
</dbReference>
<dbReference type="STRING" id="10090.ENSMUSP00000120938"/>
<dbReference type="GlyGen" id="Q8C120">
    <property type="glycosylation" value="6 sites, 1 N-linked glycan (1 site), 1 O-linked glycan (2 sites)"/>
</dbReference>
<dbReference type="iPTMnet" id="Q8C120"/>
<dbReference type="PhosphoSitePlus" id="Q8C120"/>
<dbReference type="PaxDb" id="10090-ENSMUSP00000120938"/>
<dbReference type="ProteomicsDB" id="257142">
    <molecule id="Q8C120-1"/>
</dbReference>
<dbReference type="ProteomicsDB" id="257143">
    <molecule id="Q8C120-2"/>
</dbReference>
<dbReference type="ProteomicsDB" id="257144">
    <molecule id="Q8C120-3"/>
</dbReference>
<dbReference type="ProteomicsDB" id="257145">
    <molecule id="Q8C120-4"/>
</dbReference>
<dbReference type="Pumba" id="Q8C120"/>
<dbReference type="Antibodypedia" id="64583">
    <property type="antibodies" value="76 antibodies from 18 providers"/>
</dbReference>
<dbReference type="DNASU" id="237353"/>
<dbReference type="Ensembl" id="ENSMUST00000135526.9">
    <molecule id="Q8C120-4"/>
    <property type="protein sequence ID" value="ENSMUSP00000114368.2"/>
    <property type="gene ID" value="ENSMUSG00000037990.19"/>
</dbReference>
<dbReference type="Ensembl" id="ENSMUST00000153031.2">
    <molecule id="Q8C120-1"/>
    <property type="protein sequence ID" value="ENSMUSP00000120938.2"/>
    <property type="gene ID" value="ENSMUSG00000037990.19"/>
</dbReference>
<dbReference type="GeneID" id="237353"/>
<dbReference type="KEGG" id="mmu:237353"/>
<dbReference type="UCSC" id="uc007fdj.2">
    <molecule id="Q8C120-4"/>
    <property type="organism name" value="mouse"/>
</dbReference>
<dbReference type="UCSC" id="uc007fdk.2">
    <molecule id="Q8C120-1"/>
    <property type="organism name" value="mouse"/>
</dbReference>
<dbReference type="UCSC" id="uc007fdl.1">
    <molecule id="Q8C120-3"/>
    <property type="organism name" value="mouse"/>
</dbReference>
<dbReference type="AGR" id="MGI:2444637"/>
<dbReference type="CTD" id="344558"/>
<dbReference type="MGI" id="MGI:2444637">
    <property type="gene designation" value="Sh3rf3"/>
</dbReference>
<dbReference type="VEuPathDB" id="HostDB:ENSMUSG00000037990"/>
<dbReference type="eggNOG" id="KOG2177">
    <property type="taxonomic scope" value="Eukaryota"/>
</dbReference>
<dbReference type="GeneTree" id="ENSGT00940000160405"/>
<dbReference type="HOGENOM" id="CLU_015769_3_1_1"/>
<dbReference type="InParanoid" id="Q8C120"/>
<dbReference type="OMA" id="SEMRGAM"/>
<dbReference type="OrthoDB" id="19092at2759"/>
<dbReference type="PhylomeDB" id="Q8C120"/>
<dbReference type="TreeFam" id="TF105571"/>
<dbReference type="UniPathway" id="UPA00143"/>
<dbReference type="BioGRID-ORCS" id="237353">
    <property type="hits" value="3 hits in 78 CRISPR screens"/>
</dbReference>
<dbReference type="ChiTaRS" id="Sh3rf3">
    <property type="organism name" value="mouse"/>
</dbReference>
<dbReference type="PRO" id="PR:Q8C120"/>
<dbReference type="Proteomes" id="UP000000589">
    <property type="component" value="Chromosome 10"/>
</dbReference>
<dbReference type="RNAct" id="Q8C120">
    <property type="molecule type" value="protein"/>
</dbReference>
<dbReference type="Bgee" id="ENSMUSG00000037990">
    <property type="expression patterns" value="Expressed in secondary oocyte and 85 other cell types or tissues"/>
</dbReference>
<dbReference type="GO" id="GO:0061630">
    <property type="term" value="F:ubiquitin protein ligase activity"/>
    <property type="evidence" value="ECO:0000250"/>
    <property type="project" value="UniProtKB"/>
</dbReference>
<dbReference type="GO" id="GO:0008270">
    <property type="term" value="F:zinc ion binding"/>
    <property type="evidence" value="ECO:0007669"/>
    <property type="project" value="UniProtKB-KW"/>
</dbReference>
<dbReference type="GO" id="GO:0046330">
    <property type="term" value="P:positive regulation of JNK cascade"/>
    <property type="evidence" value="ECO:0000250"/>
    <property type="project" value="UniProtKB"/>
</dbReference>
<dbReference type="GO" id="GO:0051865">
    <property type="term" value="P:protein autoubiquitination"/>
    <property type="evidence" value="ECO:0000250"/>
    <property type="project" value="UniProtKB"/>
</dbReference>
<dbReference type="CDD" id="cd16750">
    <property type="entry name" value="RING-HC_SH3RF3"/>
    <property type="match status" value="1"/>
</dbReference>
<dbReference type="CDD" id="cd11925">
    <property type="entry name" value="SH3_SH3RF3_3"/>
    <property type="match status" value="1"/>
</dbReference>
<dbReference type="CDD" id="cd11785">
    <property type="entry name" value="SH3_SH3RF_C"/>
    <property type="match status" value="1"/>
</dbReference>
<dbReference type="FunFam" id="3.30.40.10:FF:000077">
    <property type="entry name" value="E3 ubiquitin-protein ligase SH3RF1 isoform X1"/>
    <property type="match status" value="1"/>
</dbReference>
<dbReference type="FunFam" id="2.30.30.40:FF:000063">
    <property type="entry name" value="Putative E3 ubiquitin-protein ligase SH3RF1"/>
    <property type="match status" value="1"/>
</dbReference>
<dbReference type="FunFam" id="2.30.30.40:FF:000091">
    <property type="entry name" value="Putative E3 ubiquitin-protein ligase SH3RF1"/>
    <property type="match status" value="1"/>
</dbReference>
<dbReference type="FunFam" id="2.30.30.40:FF:000118">
    <property type="entry name" value="Putative E3 ubiquitin-protein ligase SH3RF1"/>
    <property type="match status" value="1"/>
</dbReference>
<dbReference type="FunFam" id="2.30.30.40:FF:000001">
    <property type="entry name" value="Sorbin and SH3 domain-containing protein 1 isoform 2"/>
    <property type="match status" value="1"/>
</dbReference>
<dbReference type="Gene3D" id="2.30.30.40">
    <property type="entry name" value="SH3 Domains"/>
    <property type="match status" value="4"/>
</dbReference>
<dbReference type="Gene3D" id="3.30.40.10">
    <property type="entry name" value="Zinc/RING finger domain, C3HC4 (zinc finger)"/>
    <property type="match status" value="1"/>
</dbReference>
<dbReference type="InterPro" id="IPR050384">
    <property type="entry name" value="Endophilin_SH3RF"/>
</dbReference>
<dbReference type="InterPro" id="IPR036028">
    <property type="entry name" value="SH3-like_dom_sf"/>
</dbReference>
<dbReference type="InterPro" id="IPR001452">
    <property type="entry name" value="SH3_domain"/>
</dbReference>
<dbReference type="InterPro" id="IPR035816">
    <property type="entry name" value="SH3RF1/SH3RF3_SH3_4"/>
</dbReference>
<dbReference type="InterPro" id="IPR028502">
    <property type="entry name" value="SH3RF3_RING-HC_Zfn"/>
</dbReference>
<dbReference type="InterPro" id="IPR035612">
    <property type="entry name" value="SH3RF3_SH3_3"/>
</dbReference>
<dbReference type="InterPro" id="IPR027370">
    <property type="entry name" value="Znf-RING_euk"/>
</dbReference>
<dbReference type="InterPro" id="IPR001841">
    <property type="entry name" value="Znf_RING"/>
</dbReference>
<dbReference type="InterPro" id="IPR013083">
    <property type="entry name" value="Znf_RING/FYVE/PHD"/>
</dbReference>
<dbReference type="InterPro" id="IPR017907">
    <property type="entry name" value="Znf_RING_CS"/>
</dbReference>
<dbReference type="PANTHER" id="PTHR14167:SF116">
    <property type="entry name" value="CAP, ISOFORM AC"/>
    <property type="match status" value="1"/>
</dbReference>
<dbReference type="PANTHER" id="PTHR14167">
    <property type="entry name" value="SH3 DOMAIN-CONTAINING"/>
    <property type="match status" value="1"/>
</dbReference>
<dbReference type="Pfam" id="PF00018">
    <property type="entry name" value="SH3_1"/>
    <property type="match status" value="2"/>
</dbReference>
<dbReference type="Pfam" id="PF14604">
    <property type="entry name" value="SH3_9"/>
    <property type="match status" value="2"/>
</dbReference>
<dbReference type="Pfam" id="PF13445">
    <property type="entry name" value="zf-RING_UBOX"/>
    <property type="match status" value="1"/>
</dbReference>
<dbReference type="PRINTS" id="PR00499">
    <property type="entry name" value="P67PHOX"/>
</dbReference>
<dbReference type="PRINTS" id="PR00452">
    <property type="entry name" value="SH3DOMAIN"/>
</dbReference>
<dbReference type="SMART" id="SM00184">
    <property type="entry name" value="RING"/>
    <property type="match status" value="1"/>
</dbReference>
<dbReference type="SMART" id="SM00326">
    <property type="entry name" value="SH3"/>
    <property type="match status" value="4"/>
</dbReference>
<dbReference type="SUPFAM" id="SSF57850">
    <property type="entry name" value="RING/U-box"/>
    <property type="match status" value="1"/>
</dbReference>
<dbReference type="SUPFAM" id="SSF50044">
    <property type="entry name" value="SH3-domain"/>
    <property type="match status" value="4"/>
</dbReference>
<dbReference type="PROSITE" id="PS50002">
    <property type="entry name" value="SH3"/>
    <property type="match status" value="4"/>
</dbReference>
<dbReference type="PROSITE" id="PS00518">
    <property type="entry name" value="ZF_RING_1"/>
    <property type="match status" value="1"/>
</dbReference>
<dbReference type="PROSITE" id="PS50089">
    <property type="entry name" value="ZF_RING_2"/>
    <property type="match status" value="1"/>
</dbReference>
<reference key="1">
    <citation type="journal article" date="2009" name="PLoS Biol.">
        <title>Lineage-specific biology revealed by a finished genome assembly of the mouse.</title>
        <authorList>
            <person name="Church D.M."/>
            <person name="Goodstadt L."/>
            <person name="Hillier L.W."/>
            <person name="Zody M.C."/>
            <person name="Goldstein S."/>
            <person name="She X."/>
            <person name="Bult C.J."/>
            <person name="Agarwala R."/>
            <person name="Cherry J.L."/>
            <person name="DiCuccio M."/>
            <person name="Hlavina W."/>
            <person name="Kapustin Y."/>
            <person name="Meric P."/>
            <person name="Maglott D."/>
            <person name="Birtle Z."/>
            <person name="Marques A.C."/>
            <person name="Graves T."/>
            <person name="Zhou S."/>
            <person name="Teague B."/>
            <person name="Potamousis K."/>
            <person name="Churas C."/>
            <person name="Place M."/>
            <person name="Herschleb J."/>
            <person name="Runnheim R."/>
            <person name="Forrest D."/>
            <person name="Amos-Landgraf J."/>
            <person name="Schwartz D.C."/>
            <person name="Cheng Z."/>
            <person name="Lindblad-Toh K."/>
            <person name="Eichler E.E."/>
            <person name="Ponting C.P."/>
        </authorList>
    </citation>
    <scope>NUCLEOTIDE SEQUENCE [LARGE SCALE GENOMIC DNA]</scope>
    <source>
        <strain>C57BL/6J</strain>
    </source>
</reference>
<reference key="2">
    <citation type="journal article" date="2005" name="Science">
        <title>The transcriptional landscape of the mammalian genome.</title>
        <authorList>
            <person name="Carninci P."/>
            <person name="Kasukawa T."/>
            <person name="Katayama S."/>
            <person name="Gough J."/>
            <person name="Frith M.C."/>
            <person name="Maeda N."/>
            <person name="Oyama R."/>
            <person name="Ravasi T."/>
            <person name="Lenhard B."/>
            <person name="Wells C."/>
            <person name="Kodzius R."/>
            <person name="Shimokawa K."/>
            <person name="Bajic V.B."/>
            <person name="Brenner S.E."/>
            <person name="Batalov S."/>
            <person name="Forrest A.R."/>
            <person name="Zavolan M."/>
            <person name="Davis M.J."/>
            <person name="Wilming L.G."/>
            <person name="Aidinis V."/>
            <person name="Allen J.E."/>
            <person name="Ambesi-Impiombato A."/>
            <person name="Apweiler R."/>
            <person name="Aturaliya R.N."/>
            <person name="Bailey T.L."/>
            <person name="Bansal M."/>
            <person name="Baxter L."/>
            <person name="Beisel K.W."/>
            <person name="Bersano T."/>
            <person name="Bono H."/>
            <person name="Chalk A.M."/>
            <person name="Chiu K.P."/>
            <person name="Choudhary V."/>
            <person name="Christoffels A."/>
            <person name="Clutterbuck D.R."/>
            <person name="Crowe M.L."/>
            <person name="Dalla E."/>
            <person name="Dalrymple B.P."/>
            <person name="de Bono B."/>
            <person name="Della Gatta G."/>
            <person name="di Bernardo D."/>
            <person name="Down T."/>
            <person name="Engstrom P."/>
            <person name="Fagiolini M."/>
            <person name="Faulkner G."/>
            <person name="Fletcher C.F."/>
            <person name="Fukushima T."/>
            <person name="Furuno M."/>
            <person name="Futaki S."/>
            <person name="Gariboldi M."/>
            <person name="Georgii-Hemming P."/>
            <person name="Gingeras T.R."/>
            <person name="Gojobori T."/>
            <person name="Green R.E."/>
            <person name="Gustincich S."/>
            <person name="Harbers M."/>
            <person name="Hayashi Y."/>
            <person name="Hensch T.K."/>
            <person name="Hirokawa N."/>
            <person name="Hill D."/>
            <person name="Huminiecki L."/>
            <person name="Iacono M."/>
            <person name="Ikeo K."/>
            <person name="Iwama A."/>
            <person name="Ishikawa T."/>
            <person name="Jakt M."/>
            <person name="Kanapin A."/>
            <person name="Katoh M."/>
            <person name="Kawasawa Y."/>
            <person name="Kelso J."/>
            <person name="Kitamura H."/>
            <person name="Kitano H."/>
            <person name="Kollias G."/>
            <person name="Krishnan S.P."/>
            <person name="Kruger A."/>
            <person name="Kummerfeld S.K."/>
            <person name="Kurochkin I.V."/>
            <person name="Lareau L.F."/>
            <person name="Lazarevic D."/>
            <person name="Lipovich L."/>
            <person name="Liu J."/>
            <person name="Liuni S."/>
            <person name="McWilliam S."/>
            <person name="Madan Babu M."/>
            <person name="Madera M."/>
            <person name="Marchionni L."/>
            <person name="Matsuda H."/>
            <person name="Matsuzawa S."/>
            <person name="Miki H."/>
            <person name="Mignone F."/>
            <person name="Miyake S."/>
            <person name="Morris K."/>
            <person name="Mottagui-Tabar S."/>
            <person name="Mulder N."/>
            <person name="Nakano N."/>
            <person name="Nakauchi H."/>
            <person name="Ng P."/>
            <person name="Nilsson R."/>
            <person name="Nishiguchi S."/>
            <person name="Nishikawa S."/>
            <person name="Nori F."/>
            <person name="Ohara O."/>
            <person name="Okazaki Y."/>
            <person name="Orlando V."/>
            <person name="Pang K.C."/>
            <person name="Pavan W.J."/>
            <person name="Pavesi G."/>
            <person name="Pesole G."/>
            <person name="Petrovsky N."/>
            <person name="Piazza S."/>
            <person name="Reed J."/>
            <person name="Reid J.F."/>
            <person name="Ring B.Z."/>
            <person name="Ringwald M."/>
            <person name="Rost B."/>
            <person name="Ruan Y."/>
            <person name="Salzberg S.L."/>
            <person name="Sandelin A."/>
            <person name="Schneider C."/>
            <person name="Schoenbach C."/>
            <person name="Sekiguchi K."/>
            <person name="Semple C.A."/>
            <person name="Seno S."/>
            <person name="Sessa L."/>
            <person name="Sheng Y."/>
            <person name="Shibata Y."/>
            <person name="Shimada H."/>
            <person name="Shimada K."/>
            <person name="Silva D."/>
            <person name="Sinclair B."/>
            <person name="Sperling S."/>
            <person name="Stupka E."/>
            <person name="Sugiura K."/>
            <person name="Sultana R."/>
            <person name="Takenaka Y."/>
            <person name="Taki K."/>
            <person name="Tammoja K."/>
            <person name="Tan S.L."/>
            <person name="Tang S."/>
            <person name="Taylor M.S."/>
            <person name="Tegner J."/>
            <person name="Teichmann S.A."/>
            <person name="Ueda H.R."/>
            <person name="van Nimwegen E."/>
            <person name="Verardo R."/>
            <person name="Wei C.L."/>
            <person name="Yagi K."/>
            <person name="Yamanishi H."/>
            <person name="Zabarovsky E."/>
            <person name="Zhu S."/>
            <person name="Zimmer A."/>
            <person name="Hide W."/>
            <person name="Bult C."/>
            <person name="Grimmond S.M."/>
            <person name="Teasdale R.D."/>
            <person name="Liu E.T."/>
            <person name="Brusic V."/>
            <person name="Quackenbush J."/>
            <person name="Wahlestedt C."/>
            <person name="Mattick J.S."/>
            <person name="Hume D.A."/>
            <person name="Kai C."/>
            <person name="Sasaki D."/>
            <person name="Tomaru Y."/>
            <person name="Fukuda S."/>
            <person name="Kanamori-Katayama M."/>
            <person name="Suzuki M."/>
            <person name="Aoki J."/>
            <person name="Arakawa T."/>
            <person name="Iida J."/>
            <person name="Imamura K."/>
            <person name="Itoh M."/>
            <person name="Kato T."/>
            <person name="Kawaji H."/>
            <person name="Kawagashira N."/>
            <person name="Kawashima T."/>
            <person name="Kojima M."/>
            <person name="Kondo S."/>
            <person name="Konno H."/>
            <person name="Nakano K."/>
            <person name="Ninomiya N."/>
            <person name="Nishio T."/>
            <person name="Okada M."/>
            <person name="Plessy C."/>
            <person name="Shibata K."/>
            <person name="Shiraki T."/>
            <person name="Suzuki S."/>
            <person name="Tagami M."/>
            <person name="Waki K."/>
            <person name="Watahiki A."/>
            <person name="Okamura-Oho Y."/>
            <person name="Suzuki H."/>
            <person name="Kawai J."/>
            <person name="Hayashizaki Y."/>
        </authorList>
    </citation>
    <scope>NUCLEOTIDE SEQUENCE [LARGE SCALE MRNA] (ISOFORMS 2; 3 AND 4)</scope>
    <source>
        <strain>C57BL/6J</strain>
        <tissue>Head</tissue>
        <tissue>Testis</tissue>
    </source>
</reference>
<reference key="3">
    <citation type="journal article" date="2004" name="Genome Res.">
        <title>The status, quality, and expansion of the NIH full-length cDNA project: the Mammalian Gene Collection (MGC).</title>
        <authorList>
            <consortium name="The MGC Project Team"/>
        </authorList>
    </citation>
    <scope>NUCLEOTIDE SEQUENCE [LARGE SCALE MRNA] (ISOFORM 2)</scope>
    <source>
        <strain>C57BL/6J</strain>
        <tissue>Brain</tissue>
    </source>
</reference>
<reference key="4">
    <citation type="journal article" date="2010" name="Cell">
        <title>A tissue-specific atlas of mouse protein phosphorylation and expression.</title>
        <authorList>
            <person name="Huttlin E.L."/>
            <person name="Jedrychowski M.P."/>
            <person name="Elias J.E."/>
            <person name="Goswami T."/>
            <person name="Rad R."/>
            <person name="Beausoleil S.A."/>
            <person name="Villen J."/>
            <person name="Haas W."/>
            <person name="Sowa M.E."/>
            <person name="Gygi S.P."/>
        </authorList>
    </citation>
    <scope>IDENTIFICATION BY MASS SPECTROMETRY [LARGE SCALE ANALYSIS]</scope>
    <source>
        <tissue>Brain</tissue>
    </source>
</reference>
<accession>Q8C120</accession>
<accession>Q3V0K8</accession>
<accession>Q3V0Q0</accession>